<evidence type="ECO:0000255" key="1">
    <source>
        <dbReference type="HAMAP-Rule" id="MF_00416"/>
    </source>
</evidence>
<keyword id="KW-0975">Bacterial flagellum</keyword>
<keyword id="KW-0574">Periplasm</keyword>
<keyword id="KW-0732">Signal</keyword>
<reference key="1">
    <citation type="journal article" date="2011" name="J. Bacteriol.">
        <title>Whole-genome sequences of thirteen isolates of Borrelia burgdorferi.</title>
        <authorList>
            <person name="Schutzer S.E."/>
            <person name="Fraser-Liggett C.M."/>
            <person name="Casjens S.R."/>
            <person name="Qiu W.G."/>
            <person name="Dunn J.J."/>
            <person name="Mongodin E.F."/>
            <person name="Luft B.J."/>
        </authorList>
    </citation>
    <scope>NUCLEOTIDE SEQUENCE [LARGE SCALE GENOMIC DNA]</scope>
    <source>
        <strain>ZS7</strain>
    </source>
</reference>
<sequence>MNKPMLMLITFATSLLAQTNKASTGLKTDQSFNNSLSESVKLKEIADIYPTNTNFLTGIGIVAGLAGKGDSIKQKDLIIKILEENNIINEIGSNNIESKNIALVNVSLQVKGNTIKGSKHKACVASILDSKDLTNGILLKTNLKNKEGEIIAIASGITQPNNKLKGSGYTIDSVIINENQNINHSYNIILKKGNYTLINRIHKILTSKKINNKIKSDSTIEIEAKNISLLEEIENIKIETNPKILIDKKNGIILASENAKIGTFTFSIEKDNQNIFLSKNNKTTIQVNSMKLNEFILKNSNNLSNKELIQIIQAAQKINKLNGELILEEIDGNQN</sequence>
<name>FLGI_BORBZ</name>
<feature type="signal peptide" evidence="1">
    <location>
        <begin position="1"/>
        <end position="17"/>
    </location>
</feature>
<feature type="chain" id="PRO_1000123967" description="Flagellar P-ring protein">
    <location>
        <begin position="18"/>
        <end position="335"/>
    </location>
</feature>
<gene>
    <name evidence="1" type="primary">flgI</name>
    <name type="ordered locus">BbuZS7_0801</name>
</gene>
<comment type="function">
    <text evidence="1">Assembles around the rod to form the L-ring and probably protects the motor/basal body from shearing forces during rotation.</text>
</comment>
<comment type="subunit">
    <text evidence="1">The basal body constitutes a major portion of the flagellar organelle and consists of four rings (L,P,S, and M) mounted on a central rod.</text>
</comment>
<comment type="subcellular location">
    <subcellularLocation>
        <location evidence="1">Periplasm</location>
    </subcellularLocation>
    <subcellularLocation>
        <location evidence="1">Bacterial flagellum basal body</location>
    </subcellularLocation>
</comment>
<comment type="similarity">
    <text evidence="1">Belongs to the FlgI family.</text>
</comment>
<dbReference type="EMBL" id="CP001205">
    <property type="protein sequence ID" value="ACK74839.1"/>
    <property type="molecule type" value="Genomic_DNA"/>
</dbReference>
<dbReference type="RefSeq" id="WP_012597364.1">
    <property type="nucleotide sequence ID" value="NC_011728.1"/>
</dbReference>
<dbReference type="SMR" id="B7J0L8"/>
<dbReference type="KEGG" id="bbz:BbuZS7_0801"/>
<dbReference type="HOGENOM" id="CLU_838549_0_0_12"/>
<dbReference type="Proteomes" id="UP000006901">
    <property type="component" value="Chromosome"/>
</dbReference>
<dbReference type="GO" id="GO:0009428">
    <property type="term" value="C:bacterial-type flagellum basal body, distal rod, P ring"/>
    <property type="evidence" value="ECO:0007669"/>
    <property type="project" value="InterPro"/>
</dbReference>
<dbReference type="GO" id="GO:0030288">
    <property type="term" value="C:outer membrane-bounded periplasmic space"/>
    <property type="evidence" value="ECO:0007669"/>
    <property type="project" value="InterPro"/>
</dbReference>
<dbReference type="GO" id="GO:0005198">
    <property type="term" value="F:structural molecule activity"/>
    <property type="evidence" value="ECO:0007669"/>
    <property type="project" value="InterPro"/>
</dbReference>
<dbReference type="GO" id="GO:0071973">
    <property type="term" value="P:bacterial-type flagellum-dependent cell motility"/>
    <property type="evidence" value="ECO:0007669"/>
    <property type="project" value="InterPro"/>
</dbReference>
<dbReference type="HAMAP" id="MF_00416">
    <property type="entry name" value="FlgI"/>
    <property type="match status" value="1"/>
</dbReference>
<dbReference type="InterPro" id="IPR001782">
    <property type="entry name" value="Flag_FlgI"/>
</dbReference>
<dbReference type="NCBIfam" id="NF009348">
    <property type="entry name" value="PRK12706.1"/>
    <property type="match status" value="1"/>
</dbReference>
<dbReference type="PANTHER" id="PTHR30381">
    <property type="entry name" value="FLAGELLAR P-RING PERIPLASMIC PROTEIN FLGI"/>
    <property type="match status" value="1"/>
</dbReference>
<dbReference type="PANTHER" id="PTHR30381:SF0">
    <property type="entry name" value="FLAGELLAR P-RING PROTEIN"/>
    <property type="match status" value="1"/>
</dbReference>
<dbReference type="Pfam" id="PF02119">
    <property type="entry name" value="FlgI"/>
    <property type="match status" value="1"/>
</dbReference>
<dbReference type="PRINTS" id="PR01010">
    <property type="entry name" value="FLGPRINGFLGI"/>
</dbReference>
<organism>
    <name type="scientific">Borreliella burgdorferi (strain ZS7)</name>
    <name type="common">Borrelia burgdorferi</name>
    <dbReference type="NCBI Taxonomy" id="445985"/>
    <lineage>
        <taxon>Bacteria</taxon>
        <taxon>Pseudomonadati</taxon>
        <taxon>Spirochaetota</taxon>
        <taxon>Spirochaetia</taxon>
        <taxon>Spirochaetales</taxon>
        <taxon>Borreliaceae</taxon>
        <taxon>Borreliella</taxon>
    </lineage>
</organism>
<accession>B7J0L8</accession>
<proteinExistence type="inferred from homology"/>
<protein>
    <recommendedName>
        <fullName evidence="1">Flagellar P-ring protein</fullName>
    </recommendedName>
    <alternativeName>
        <fullName evidence="1">Basal body P-ring protein</fullName>
    </alternativeName>
</protein>